<name>MLFA_ASPBC</name>
<feature type="chain" id="PRO_0000446429" description="Malformin synthetase mlfA">
    <location>
        <begin position="1"/>
        <end position="5112"/>
    </location>
</feature>
<feature type="domain" description="Carrier 1" evidence="2 11">
    <location>
        <begin position="757"/>
        <end position="830"/>
    </location>
</feature>
<feature type="domain" description="Carrier 2" evidence="2 11">
    <location>
        <begin position="1854"/>
        <end position="1931"/>
    </location>
</feature>
<feature type="domain" description="Carrier 3" evidence="2 11">
    <location>
        <begin position="3030"/>
        <end position="3106"/>
    </location>
</feature>
<feature type="domain" description="Carrier 4" evidence="2 11">
    <location>
        <begin position="4593"/>
        <end position="4669"/>
    </location>
</feature>
<feature type="region of interest" description="Adenylation 1" evidence="1 11">
    <location>
        <begin position="225"/>
        <end position="616"/>
    </location>
</feature>
<feature type="region of interest" description="Condensation 1" evidence="1 11">
    <location>
        <begin position="868"/>
        <end position="1299"/>
    </location>
</feature>
<feature type="region of interest" description="Adenylation 2" evidence="1 11">
    <location>
        <begin position="1327"/>
        <end position="1716"/>
    </location>
</feature>
<feature type="region of interest" description="Disordered" evidence="3">
    <location>
        <begin position="1926"/>
        <end position="1961"/>
    </location>
</feature>
<feature type="region of interest" description="Disordered" evidence="3">
    <location>
        <begin position="1994"/>
        <end position="2034"/>
    </location>
</feature>
<feature type="region of interest" description="Condensation 2" evidence="1 11">
    <location>
        <begin position="2064"/>
        <end position="2479"/>
    </location>
</feature>
<feature type="region of interest" description="Adenylation 3" evidence="1 11">
    <location>
        <begin position="2502"/>
        <end position="2894"/>
    </location>
</feature>
<feature type="region of interest" description="Condensation 3" evidence="1 11">
    <location>
        <begin position="3122"/>
        <end position="3586"/>
    </location>
</feature>
<feature type="region of interest" description="Condensation 4" evidence="1 11">
    <location>
        <begin position="3607"/>
        <end position="4044"/>
    </location>
</feature>
<feature type="region of interest" description="Adenylation 4" evidence="1 11">
    <location>
        <begin position="4069"/>
        <end position="4459"/>
    </location>
</feature>
<feature type="region of interest" description="Condensation 5" evidence="1 11">
    <location>
        <begin position="4724"/>
        <end position="5106"/>
    </location>
</feature>
<feature type="compositionally biased region" description="Low complexity" evidence="3">
    <location>
        <begin position="1930"/>
        <end position="1941"/>
    </location>
</feature>
<feature type="compositionally biased region" description="Low complexity" evidence="3">
    <location>
        <begin position="1994"/>
        <end position="2012"/>
    </location>
</feature>
<feature type="modified residue" description="O-(pantetheine 4'-phosphoryl)serine" evidence="2">
    <location>
        <position position="791"/>
    </location>
</feature>
<feature type="modified residue" description="O-(pantetheine 4'-phosphoryl)serine" evidence="2">
    <location>
        <position position="1891"/>
    </location>
</feature>
<feature type="modified residue" description="O-(pantetheine 4'-phosphoryl)serine" evidence="2">
    <location>
        <position position="3067"/>
    </location>
</feature>
<feature type="modified residue" description="O-(pantetheine 4'-phosphoryl)serine" evidence="2">
    <location>
        <position position="4630"/>
    </location>
</feature>
<comment type="function">
    <text evidence="8 11">Nonribosomal peptide synthetase; part of the gene cluster that mediates the biosynthesis of malformins, cyclic pentapeptides with a disulfide bond between 2 consecutive cysteins, that show potential anti-tumor as well as antimalarial and antitrypanosomal properties (PubMed:30560908). The nonribosomal peptide synthetase mlfA is responsible of the formation of the cyclic pentapeptide. MlfA probably acts iteratively on one amino acid and possesses multiple amino acid specificities since it is involved in the biosynthesis of multiple malformins, including malformin C and malformin A2. Malformin C corresponds to a cyclo[D-Cys-D-Cys-Val-D-Leu-Val] pentapeptide whereas malformin A2 corresponds to a cyclo[D-Cys-D-Cys-Val-D-Leu-Ile] pentapeptide (PubMed:30560908). The malformin biosynthesis clusters in malformin-producing fungi also contain enzymes involved in the formation of the disulfide bond between the two consecutive cysteins within malformins, in addition to additional tailoring enzymes such as methyltransferases or oxidoreductases. They are also composed of up to 4 major facilitator superfamily transporters, and transcription factors probably involved in the regulation of the expression of those clusters (Probable).</text>
</comment>
<comment type="pathway">
    <text evidence="8">Secondary metabolite biosynthesis.</text>
</comment>
<comment type="domain">
    <text evidence="11">NRP synthetases are composed of discrete domains (adenylation (A), thiolation (T) or peptidyl carrier protein (PCP) and condensation (C) domains) which when grouped together are referred to as a single module. Each module is responsible for the recognition (via the A domain) and incorporation of a single amino acid into the growing peptide product. Thus, an NRP synthetase is generally composed of one or more modules and can terminate in a thioesterase domain (TE) that releases the newly synthesized peptide from the enzyme. Occasionally, epimerase (E) domains (responsible for L- to D- amino acid conversion) are present within the NRP synthetase. MlfA has the following architecture: A-T-C-A-T-C-A-T-C-C-A-T-C, with the functions of the five condensation domains during malformin biosynthesis being DL-joining (epimerizing subtype), LL-joining, epimerization, DL-joining and cyclizing domain, respectively.</text>
</comment>
<comment type="disruption phenotype">
    <text evidence="8">Leads to a total abolishment of malformin A2 and C production.</text>
</comment>
<comment type="biotechnology">
    <text evidence="4 5 6 7">Malformins show anti-tumor properties against human colorectal and prostate cancer cells by the inhibition of proliferation and induction of apoptosis through the activation of the p38 signaling pathway (PubMed:26540166, PubMed:26645406, PubMed:28713983). Malformin C has also been shown to exhibit potent antimalarial and antitrypanosomal properties (PubMed:19876076).</text>
</comment>
<comment type="similarity">
    <text evidence="10">Belongs to the NRP synthetase family.</text>
</comment>
<gene>
    <name evidence="9" type="primary">mlfA</name>
    <name type="ORF">ASPBRDRAFT_34020</name>
</gene>
<accession>A0A1L9U7P9</accession>
<organism>
    <name type="scientific">Aspergillus brasiliensis (strain CBS 101740 / IMI 381727 / IBT 21946)</name>
    <dbReference type="NCBI Taxonomy" id="767769"/>
    <lineage>
        <taxon>Eukaryota</taxon>
        <taxon>Fungi</taxon>
        <taxon>Dikarya</taxon>
        <taxon>Ascomycota</taxon>
        <taxon>Pezizomycotina</taxon>
        <taxon>Eurotiomycetes</taxon>
        <taxon>Eurotiomycetidae</taxon>
        <taxon>Eurotiales</taxon>
        <taxon>Aspergillaceae</taxon>
        <taxon>Aspergillus</taxon>
        <taxon>Aspergillus subgen. Circumdati</taxon>
    </lineage>
</organism>
<proteinExistence type="evidence at protein level"/>
<evidence type="ECO:0000255" key="1"/>
<evidence type="ECO:0000255" key="2">
    <source>
        <dbReference type="PROSITE-ProRule" id="PRU00258"/>
    </source>
</evidence>
<evidence type="ECO:0000256" key="3">
    <source>
        <dbReference type="SAM" id="MobiDB-lite"/>
    </source>
</evidence>
<evidence type="ECO:0000269" key="4">
    <source>
    </source>
</evidence>
<evidence type="ECO:0000269" key="5">
    <source>
    </source>
</evidence>
<evidence type="ECO:0000269" key="6">
    <source>
    </source>
</evidence>
<evidence type="ECO:0000269" key="7">
    <source>
    </source>
</evidence>
<evidence type="ECO:0000269" key="8">
    <source>
    </source>
</evidence>
<evidence type="ECO:0000303" key="9">
    <source>
    </source>
</evidence>
<evidence type="ECO:0000305" key="10"/>
<evidence type="ECO:0000305" key="11">
    <source>
    </source>
</evidence>
<reference key="1">
    <citation type="journal article" date="2017" name="Genome Biol.">
        <title>Comparative genomics reveals high biological diversity and specific adaptations in the industrially and medically important fungal genus Aspergillus.</title>
        <authorList>
            <person name="de Vries R.P."/>
            <person name="Riley R."/>
            <person name="Wiebenga A."/>
            <person name="Aguilar-Osorio G."/>
            <person name="Amillis S."/>
            <person name="Uchima C.A."/>
            <person name="Anderluh G."/>
            <person name="Asadollahi M."/>
            <person name="Askin M."/>
            <person name="Barry K."/>
            <person name="Battaglia E."/>
            <person name="Bayram O."/>
            <person name="Benocci T."/>
            <person name="Braus-Stromeyer S.A."/>
            <person name="Caldana C."/>
            <person name="Canovas D."/>
            <person name="Cerqueira G.C."/>
            <person name="Chen F."/>
            <person name="Chen W."/>
            <person name="Choi C."/>
            <person name="Clum A."/>
            <person name="Dos Santos R.A."/>
            <person name="Damasio A.R."/>
            <person name="Diallinas G."/>
            <person name="Emri T."/>
            <person name="Fekete E."/>
            <person name="Flipphi M."/>
            <person name="Freyberg S."/>
            <person name="Gallo A."/>
            <person name="Gournas C."/>
            <person name="Habgood R."/>
            <person name="Hainaut M."/>
            <person name="Harispe M.L."/>
            <person name="Henrissat B."/>
            <person name="Hilden K.S."/>
            <person name="Hope R."/>
            <person name="Hossain A."/>
            <person name="Karabika E."/>
            <person name="Karaffa L."/>
            <person name="Karanyi Z."/>
            <person name="Krasevec N."/>
            <person name="Kuo A."/>
            <person name="Kusch H."/>
            <person name="LaButti K."/>
            <person name="Lagendijk E.L."/>
            <person name="Lapidus A."/>
            <person name="Levasseur A."/>
            <person name="Lindquist E."/>
            <person name="Lipzen A."/>
            <person name="Logrieco A.F."/>
            <person name="MacCabe A."/>
            <person name="Maekelae M.R."/>
            <person name="Malavazi I."/>
            <person name="Melin P."/>
            <person name="Meyer V."/>
            <person name="Mielnichuk N."/>
            <person name="Miskei M."/>
            <person name="Molnar A.P."/>
            <person name="Mule G."/>
            <person name="Ngan C.Y."/>
            <person name="Orejas M."/>
            <person name="Orosz E."/>
            <person name="Ouedraogo J.P."/>
            <person name="Overkamp K.M."/>
            <person name="Park H.-S."/>
            <person name="Perrone G."/>
            <person name="Piumi F."/>
            <person name="Punt P.J."/>
            <person name="Ram A.F."/>
            <person name="Ramon A."/>
            <person name="Rauscher S."/>
            <person name="Record E."/>
            <person name="Riano-Pachon D.M."/>
            <person name="Robert V."/>
            <person name="Roehrig J."/>
            <person name="Ruller R."/>
            <person name="Salamov A."/>
            <person name="Salih N.S."/>
            <person name="Samson R.A."/>
            <person name="Sandor E."/>
            <person name="Sanguinetti M."/>
            <person name="Schuetze T."/>
            <person name="Sepcic K."/>
            <person name="Shelest E."/>
            <person name="Sherlock G."/>
            <person name="Sophianopoulou V."/>
            <person name="Squina F.M."/>
            <person name="Sun H."/>
            <person name="Susca A."/>
            <person name="Todd R.B."/>
            <person name="Tsang A."/>
            <person name="Unkles S.E."/>
            <person name="van de Wiele N."/>
            <person name="van Rossen-Uffink D."/>
            <person name="Oliveira J.V."/>
            <person name="Vesth T.C."/>
            <person name="Visser J."/>
            <person name="Yu J.-H."/>
            <person name="Zhou M."/>
            <person name="Andersen M.R."/>
            <person name="Archer D.B."/>
            <person name="Baker S.E."/>
            <person name="Benoit I."/>
            <person name="Brakhage A.A."/>
            <person name="Braus G.H."/>
            <person name="Fischer R."/>
            <person name="Frisvad J.C."/>
            <person name="Goldman G.H."/>
            <person name="Houbraken J."/>
            <person name="Oakley B."/>
            <person name="Pocsi I."/>
            <person name="Scazzocchio C."/>
            <person name="Seiboth B."/>
            <person name="vanKuyk P.A."/>
            <person name="Wortman J."/>
            <person name="Dyer P.S."/>
            <person name="Grigoriev I.V."/>
        </authorList>
    </citation>
    <scope>NUCLEOTIDE SEQUENCE [LARGE SCALE GENOMIC DNA]</scope>
    <source>
        <strain>CBS 101740 / IMI 381727 / IBT 21946</strain>
    </source>
</reference>
<reference key="2">
    <citation type="journal article" date="2009" name="J. Antibiot.">
        <title>Solid-phase synthesis and biological activity of malformin C and its derivatives.</title>
        <authorList>
            <person name="Kojima Y."/>
            <person name="Sunazuka T."/>
            <person name="Nagai K."/>
            <person name="Hirose T."/>
            <person name="Namatame M."/>
            <person name="Ishiyama A."/>
            <person name="Otoguro K."/>
            <person name="Omura S."/>
        </authorList>
    </citation>
    <scope>BIOTECHNOLOGY</scope>
</reference>
<reference key="3">
    <citation type="journal article" date="2015" name="PLoS ONE">
        <title>Study of malformin C, a fungal source cyclic pentapeptide, as an anti-cancer drug.</title>
        <authorList>
            <person name="Wang J."/>
            <person name="Jiang Z."/>
            <person name="Lam W."/>
            <person name="Gullen E.A."/>
            <person name="Yu Z."/>
            <person name="Wei Y."/>
            <person name="Wang L."/>
            <person name="Zeiss C."/>
            <person name="Beck A."/>
            <person name="Cheng E.C."/>
            <person name="Wu C."/>
            <person name="Cheng Y.C."/>
            <person name="Zhang Y."/>
        </authorList>
    </citation>
    <scope>BIOTECHNOLOGY</scope>
</reference>
<reference key="4">
    <citation type="journal article" date="2016" name="Cancer Chemother. Pharmacol.">
        <title>Malformin A1 promotes cell death through induction of apoptosis, necrosis and autophagy in prostate cancer cells.</title>
        <authorList>
            <person name="Liu Y."/>
            <person name="Wang M."/>
            <person name="Wang D."/>
            <person name="Li X."/>
            <person name="Wang W."/>
            <person name="Lou H."/>
            <person name="Yuan H."/>
        </authorList>
    </citation>
    <scope>BIOTECHNOLOGY</scope>
</reference>
<reference key="5">
    <citation type="journal article" date="2017" name="Int. J. Oncol.">
        <title>Malformin A1 treatment alters invasive and oncogenic phenotypes of human colorectal cancer cells through stimulation of the p38 signaling pathway.</title>
        <authorList>
            <person name="Park S.Y."/>
            <person name="Oh H.H."/>
            <person name="Park Y.L."/>
            <person name="Yu H.M."/>
            <person name="Myung D.S."/>
            <person name="Cho S.B."/>
            <person name="Lee W.S."/>
            <person name="Park D."/>
            <person name="Joo Y.E."/>
        </authorList>
    </citation>
    <scope>BIOTECHNOLOGY</scope>
</reference>
<reference key="6">
    <citation type="journal article" date="2018" name="Sci. Rep.">
        <title>Uncovering secondary metabolite evolution and biosynthesis using gene cluster networks and genetic dereplication.</title>
        <authorList>
            <person name="Theobald S."/>
            <person name="Vesth T.C."/>
            <person name="Rendsvig J.K."/>
            <person name="Nielsen K.F."/>
            <person name="Riley R."/>
            <person name="de Abreu L.M."/>
            <person name="Salamov A."/>
            <person name="Frisvad J.C."/>
            <person name="Larsen T.O."/>
            <person name="Andersen M.R."/>
            <person name="Hoof J.B."/>
        </authorList>
    </citation>
    <scope>IDENTIFICATION</scope>
    <scope>DOMAIN</scope>
    <scope>FUNCTION</scope>
    <scope>DISRUPTION PHENOTYPE</scope>
    <scope>PATHWAY</scope>
</reference>
<dbReference type="EC" id="6.3.2.-" evidence="8"/>
<dbReference type="EMBL" id="KV878693">
    <property type="protein sequence ID" value="OJJ67652.1"/>
    <property type="molecule type" value="Genomic_DNA"/>
</dbReference>
<dbReference type="SMR" id="A0A1L9U7P9"/>
<dbReference type="STRING" id="767769.A0A1L9U7P9"/>
<dbReference type="VEuPathDB" id="FungiDB:ASPBRDRAFT_34020"/>
<dbReference type="OMA" id="PAAFHCG"/>
<dbReference type="OrthoDB" id="416786at2759"/>
<dbReference type="Proteomes" id="UP000184499">
    <property type="component" value="Unassembled WGS sequence"/>
</dbReference>
<dbReference type="GO" id="GO:0005737">
    <property type="term" value="C:cytoplasm"/>
    <property type="evidence" value="ECO:0007669"/>
    <property type="project" value="TreeGrafter"/>
</dbReference>
<dbReference type="GO" id="GO:0016874">
    <property type="term" value="F:ligase activity"/>
    <property type="evidence" value="ECO:0007669"/>
    <property type="project" value="UniProtKB-KW"/>
</dbReference>
<dbReference type="GO" id="GO:0031177">
    <property type="term" value="F:phosphopantetheine binding"/>
    <property type="evidence" value="ECO:0007669"/>
    <property type="project" value="InterPro"/>
</dbReference>
<dbReference type="GO" id="GO:0043041">
    <property type="term" value="P:amino acid activation for nonribosomal peptide biosynthetic process"/>
    <property type="evidence" value="ECO:0007669"/>
    <property type="project" value="TreeGrafter"/>
</dbReference>
<dbReference type="GO" id="GO:0044550">
    <property type="term" value="P:secondary metabolite biosynthetic process"/>
    <property type="evidence" value="ECO:0007669"/>
    <property type="project" value="TreeGrafter"/>
</dbReference>
<dbReference type="CDD" id="cd05918">
    <property type="entry name" value="A_NRPS_SidN3_like"/>
    <property type="match status" value="4"/>
</dbReference>
<dbReference type="CDD" id="cd19542">
    <property type="entry name" value="CT_NRPS-like"/>
    <property type="match status" value="2"/>
</dbReference>
<dbReference type="CDD" id="cd19534">
    <property type="entry name" value="E_NRPS"/>
    <property type="match status" value="1"/>
</dbReference>
<dbReference type="CDD" id="cd19545">
    <property type="entry name" value="FUM14_C_NRPS-like"/>
    <property type="match status" value="1"/>
</dbReference>
<dbReference type="FunFam" id="3.30.559.10:FF:000016">
    <property type="entry name" value="Nonribosomal peptide synthase Pes1"/>
    <property type="match status" value="1"/>
</dbReference>
<dbReference type="FunFam" id="3.30.559.30:FF:000002">
    <property type="entry name" value="Nonribosomal peptide synthase Pes1"/>
    <property type="match status" value="1"/>
</dbReference>
<dbReference type="FunFam" id="3.30.300.30:FF:000015">
    <property type="entry name" value="Nonribosomal peptide synthase SidD"/>
    <property type="match status" value="4"/>
</dbReference>
<dbReference type="FunFam" id="3.30.559.30:FF:000003">
    <property type="entry name" value="Nonribosomal peptide synthase SidD"/>
    <property type="match status" value="1"/>
</dbReference>
<dbReference type="FunFam" id="1.10.1200.10:FF:000005">
    <property type="entry name" value="Nonribosomal peptide synthetase 1"/>
    <property type="match status" value="2"/>
</dbReference>
<dbReference type="Gene3D" id="3.30.300.30">
    <property type="match status" value="4"/>
</dbReference>
<dbReference type="Gene3D" id="1.10.1200.10">
    <property type="entry name" value="ACP-like"/>
    <property type="match status" value="4"/>
</dbReference>
<dbReference type="Gene3D" id="3.30.559.10">
    <property type="entry name" value="Chloramphenicol acetyltransferase-like domain"/>
    <property type="match status" value="5"/>
</dbReference>
<dbReference type="Gene3D" id="3.40.50.12780">
    <property type="entry name" value="N-terminal domain of ligase-like"/>
    <property type="match status" value="4"/>
</dbReference>
<dbReference type="Gene3D" id="3.30.559.30">
    <property type="entry name" value="Nonribosomal peptide synthetase, condensation domain"/>
    <property type="match status" value="6"/>
</dbReference>
<dbReference type="InterPro" id="IPR010071">
    <property type="entry name" value="AA_adenyl_dom"/>
</dbReference>
<dbReference type="InterPro" id="IPR036736">
    <property type="entry name" value="ACP-like_sf"/>
</dbReference>
<dbReference type="InterPro" id="IPR045851">
    <property type="entry name" value="AMP-bd_C_sf"/>
</dbReference>
<dbReference type="InterPro" id="IPR020845">
    <property type="entry name" value="AMP-binding_CS"/>
</dbReference>
<dbReference type="InterPro" id="IPR000873">
    <property type="entry name" value="AMP-dep_synth/lig_dom"/>
</dbReference>
<dbReference type="InterPro" id="IPR042099">
    <property type="entry name" value="ANL_N_sf"/>
</dbReference>
<dbReference type="InterPro" id="IPR023213">
    <property type="entry name" value="CAT-like_dom_sf"/>
</dbReference>
<dbReference type="InterPro" id="IPR001242">
    <property type="entry name" value="Condensatn"/>
</dbReference>
<dbReference type="InterPro" id="IPR020806">
    <property type="entry name" value="PKS_PP-bd"/>
</dbReference>
<dbReference type="InterPro" id="IPR009081">
    <property type="entry name" value="PP-bd_ACP"/>
</dbReference>
<dbReference type="InterPro" id="IPR006162">
    <property type="entry name" value="Ppantetheine_attach_site"/>
</dbReference>
<dbReference type="NCBIfam" id="TIGR01733">
    <property type="entry name" value="AA-adenyl-dom"/>
    <property type="match status" value="4"/>
</dbReference>
<dbReference type="NCBIfam" id="NF003417">
    <property type="entry name" value="PRK04813.1"/>
    <property type="match status" value="4"/>
</dbReference>
<dbReference type="PANTHER" id="PTHR45527">
    <property type="entry name" value="NONRIBOSOMAL PEPTIDE SYNTHETASE"/>
    <property type="match status" value="1"/>
</dbReference>
<dbReference type="PANTHER" id="PTHR45527:SF12">
    <property type="entry name" value="NONRIBOSOMAL PEPTIDE SYNTHETASE IVOA"/>
    <property type="match status" value="1"/>
</dbReference>
<dbReference type="Pfam" id="PF00501">
    <property type="entry name" value="AMP-binding"/>
    <property type="match status" value="4"/>
</dbReference>
<dbReference type="Pfam" id="PF00668">
    <property type="entry name" value="Condensation"/>
    <property type="match status" value="5"/>
</dbReference>
<dbReference type="Pfam" id="PF00550">
    <property type="entry name" value="PP-binding"/>
    <property type="match status" value="4"/>
</dbReference>
<dbReference type="SMART" id="SM00823">
    <property type="entry name" value="PKS_PP"/>
    <property type="match status" value="3"/>
</dbReference>
<dbReference type="SMART" id="SM01294">
    <property type="entry name" value="PKS_PP_betabranch"/>
    <property type="match status" value="1"/>
</dbReference>
<dbReference type="SUPFAM" id="SSF56801">
    <property type="entry name" value="Acetyl-CoA synthetase-like"/>
    <property type="match status" value="4"/>
</dbReference>
<dbReference type="SUPFAM" id="SSF47336">
    <property type="entry name" value="ACP-like"/>
    <property type="match status" value="4"/>
</dbReference>
<dbReference type="SUPFAM" id="SSF52777">
    <property type="entry name" value="CoA-dependent acyltransferases"/>
    <property type="match status" value="11"/>
</dbReference>
<dbReference type="PROSITE" id="PS00455">
    <property type="entry name" value="AMP_BINDING"/>
    <property type="match status" value="3"/>
</dbReference>
<dbReference type="PROSITE" id="PS50075">
    <property type="entry name" value="CARRIER"/>
    <property type="match status" value="4"/>
</dbReference>
<dbReference type="PROSITE" id="PS00012">
    <property type="entry name" value="PHOSPHOPANTETHEINE"/>
    <property type="match status" value="1"/>
</dbReference>
<protein>
    <recommendedName>
        <fullName evidence="9">Malformin synthetase mlfA</fullName>
        <ecNumber evidence="8">6.3.2.-</ecNumber>
    </recommendedName>
    <alternativeName>
        <fullName evidence="9">Malformin biosynthesis cluster protein A</fullName>
    </alternativeName>
    <alternativeName>
        <fullName evidence="9">Nonribosomal peptide synthetase mlfA</fullName>
    </alternativeName>
</protein>
<keyword id="KW-0436">Ligase</keyword>
<keyword id="KW-0596">Phosphopantetheine</keyword>
<keyword id="KW-0597">Phosphoprotein</keyword>
<keyword id="KW-1185">Reference proteome</keyword>
<keyword id="KW-0677">Repeat</keyword>
<sequence>MSRFSCIFPTLTDGYVPNPDHTRAAGRRTYTIDLSGWNGSSGQAESYILAAWGLVLSSYVGTDEVAFYVVPTTGPDTTALAELKVEGDMSRLSLTDAAEQLLHPKHVGAGQISGETANTIITFANDIESLFVTQTEESFLLLHVHRDEKGHISLTLTYYLSLLTDAQAANVCTAMSQALAVVTTDHPERLIKDLNLMSPTHIDHIWKFNANVPGPWEECFHDVVERHAANRPHSLAVDAWDMKLTYAELVREAHLLAAYLQQRGVRPGSVVPISFERSGAALVAMLAVSKAGGAFVSVPPNLPAGRLDAILEVIEAPFVVTWSKYEAFWSERLSTLPIDNYPKPSGDATVESLGKPDDLFYVIFTSGSTGRPKGCMLSHSNWLNGALRNAPSWKYGPESRVLQMLSHTFDMSLLEICTSLGSGACVCVPCTEEIETSVSDAINRWQVNHVIMTPSLARALKPDDVPGLKTMCLGGEAFPKEIVTMWSERINLWQFYGPSECSINSSSRPITRPDADPLNIGPPNSAACWVVDAQDYNKLVPVGAIGELLVSGPIVGMGYLKNPVKTAEAFLDQVGFVSKDDPQFGGFRFYRTGDHVRWNSDGTITFCGRADTQVKLNGQRLELAEVEYQLGLEDGVQYAIAMSPQTGRCKNNLIAILTVKGTNCSNQRNAADEIPLLDRRDPIIQQTVKKLRSQLQHALPRYMVPTIWAFVGRMPMSASGKIDRVQLRNWVQEMSQETFDAITGRSFEAEDHVLGLSRLEQEIQLAWAEALGLSAAEVGLQQPFVALGGDSIKALDAVARCRTRQIKISMVHILSCEGVREAASLAEVQETPAQQVAEMAVDYSDLWTRLSTEYDLGKLGVTQVEDVEDVFPCTTMQEGMFLGQIRRPGAYHMRFFHRVQLKGGCLPTVDRIQQAWASLIERHPSLRTIFVDDLSPDAIYHSVVLRSVPLELTMREVPRDLSPEDALAMFTDELVPFRPNAPLHRMLLLTCRGRVPYFMLEISHVIMDGYALSVFRREFIQACSSTGPLPRGPDYRMFANYHRTRQTDDSAKYWTNYLSDCVPCHIPTHAVIAPTDAPPEWPRNLQRRDFSFNNSAAFLQRCKERQVTLACAIRAAWALVLRAYTQSQDVCFGYVSSGRNVPVPEVETIFGLCLSMQVCRARLSESSTIASLARKIQEDYVASLPFQHYPLAEAQRGLKQTHGQGLFNTAISMEWVPPTAEDGDALLDLEEIREQDDPTEYDVAISVDIHEGHIKLGFLYWPNLTEFEIAHLAEALQGAMNCFAYQPDDALDSLTLLQASDVCSTLADGPTLLPLEAVRVNMLSMIDRRVTRQPDTPAIEGWDGSLSYKQLHEQSCWVARNLLHQGLQLGDRVLVCADRSSRTVATILGLVRAGCVLVLSNPTDPDKRLHWLAEKCNAALIIADPAYEKRFATAGSRVLLTTAVCSPAAWDYEFPALDEHDLISILFTSGSTGTPKGILMDHGALATSVLLGHGRTLRFSRQTRMLHFASLTFDAALAEIFTTLAHGGCICVPTEEDRLSDVPGCISRFAVNTAMLTPSVGRLLDPTALPMLKSLIMVGEPMSRLDVERFAPVLDLYNGAGPTETSIMVTIAGPMTPTDEPTNLGHSVAGVRLWVTEAEDPNRLAPLGAVGELIVEGRLVTRGYLDDGERTQQAFLPSLPWLPSQHALYRTGDLVRYADDGSLRYMGRKDTQVKLRGQRIELQEVEYHLRKSLQQAQVVVEMVIPEGKTRAQASLVAFVSGLTAADVESSSACNSEESMTISQVVLPKSTIQTLEEALPRHMIPSVYYALETIPLSVNGKADRRRLREMGASLLASSAANKSTADGKKEPAKWTAASELERTLLELWATTLGLEVEAIHGDDSFFELGGDSVSAMKLVATARDKFKLSLSVPQMFRYPTIRQLAAELGESPRSSTSSASSSTEDEFTISTPDDSSTNDGVDDDFLQLATAQLAQLAQEKGKKVDIAALLKQLQGGSSSSKTPSVSSSSSSSSSRKKKSSKAAFPVEAPGPVPEPFSLLNGDADVVEQVRAHAAEQCKIPHEDIEDIYPATALQEGMMALMARTPGVYTTALTCELSSQIDLARLHSAWDKAAEAHPILRTRIIMTDDNTAVQVVQRAKGLPWDRYTLQDGESIPNLTSDMTLGSPLLRLAEIHRHSKPPMLLVAIHHALYDGWSMPLLKQAVEDAYHGQTLQPQPFTPFINYLKEGKRAAQDFWTAHLDGFAGGVFPNLPSIDHHIQPSERRSRSLTIPTAVSRNQYTMATKIQAAWAVTVSRYAEDEDIVFGTVSTGRSAPVPAIDRMVGPTITTVPVRISLGDQAQRVSPLLQRVQEDGWNRMDHEHLGLQYIGRLSESAAAACRLQTLLVIQPREESHANSGATLLSGLQDSAELEGVDTYPLMLVCEPDGASLHLTAVFDPLVLDRTILERMLAHWELVLTQLWTEPDMAVVDLDAVSYSDKQTLVQWNVGEKIADGCAHDAVHEWSIRTPHAPAVCAWDGEWTYEELDKCSSLLASQILEHGVTSGDFVALYHEKSRWVAAGILAVFKAGGILVTLDPAHPKDRIRDILDQTQPRLILTSQSLLGEARELDTPVLCLQFAASQPVPERCSSPPTVSPTQAAYAPFTSGSTGRPKGVPLEHRGLAASTASVSRACLLRPASRVLHFASFAFDASIMEPLVAWHAGGCLCIPDETARQTDLARCIRDFDVTWAFLTPSCLRLITPDDVQCLEALALGGESMTPEDISIWCPRLNQMVQLYGPAECCFVAALTEVTKPSENRLIGRPNACRCWVVNPKSPERLAPLGAIGELMVEGITVGQGYINNPERTTQSFIQPPTWLQALYPDEEQPRHLYRTGDLVRYAGEDGKLTFIGRRDGQVKLHGQRIELADVEAHLRPLIPAKHNIVVEMISSVDNQHPLLAAFVEEPSPSQGPQEQHIGLIHPSEAQYALNVKTIDGALSRTVPQHMIPSMYLHISRLPLSSSGKLNRRQLREMVAQLPRQKLNEYAAGSCEMASQRPTTAKECEMQAIWARVLAADPDTIGLNDDFFRIGGDSISGMQIATKCNAAGMHITSADLFRHRTIAQLLFHLRNAKKRGDAISLPAEPVEEWVDLAPIQQLFFEIAPEGSSHFNQSLLLRTSRHISVEELTAGLDILVKRHSMLRASFRRSESGHWSQQVRSLDSPAGTFYRLATHNGITRESLPSVFTTSQTSLSIQEGPLLAIDLVELTDGSQLLYLVAHHLVIDLVSWRILHGELEQYLQTGSLEPVTESVPFLTWSRAQAEYSAKHLTPVSALPRFQEAHDEFDGARYWGIPPESNTFGQTSTFRFTLDQTATDTLFGTGNNVLGTRPVEILQAALWYSFTQSLTDRPYPSIYVEGHGREPWADSIDISGTVGWFTTMSPLVFAPWDSLSRTSMEDFLDALSYIKDQRRRVPANGWAYFTSRYLNDEGKVAYGRMKPVVEILFNYMGQYQEMTREDAILQLAGDDIQSGTGAADIADDVPRFSLIDVGAFTANGCLSFEFIFPECIQRDARLKLWVENCERMLLSAAKLLSNEGPRKTLSDFPLMPELTYEQLSQCFEHTLPSMGLSASDVVNIYPCSSVQQGMLLAQLRDPQAYQQRFKFHVKSDERRLTLEQVKDAWREVINRHDILRTLLLPVSDHGHLDQVVMAPGSLQHLVRIDATDVNLTQGIPHSINITRDSSGTVVCEWNVSHVLVDAMSVAVIQLEVSQSLDGLLGQHEKPGQYADYIQWVSRRDKTETQAYWQRYLEGVEPCLFPKLTSTSDNVKPEGTISAVRATWDRDARMDELCQKHGITLTNLFHIVWALVLGAYVGTDDVCFGYTTLGRDVPVDGVEMMVGPLVNVLATTVQLRDEDSILDALRTHQAHLTNSLQHQHHALADVYASIGLVGSQLFNTIVSLQDVSHFDAPDEQSTRLEVQPANDASEVCHYLLVYKCFIFFDVNFRKYDVALNIGVGSSSIQLVCSYRTLSLSAEHADTLLRTASHVLSEILRDPTQRIQEIEIISPECKEQLVKWNPTVPAPSDEYIHEKIQGQCRLHSSRQAVCAWDGIFTYAELDDLSSRLAVRLTRMGATSEHIIPIYSPRSRWTVIAILGVLKTGAAFTLLEVSHPMNRLQEVCKQIDASVIIAPASHATSAASLAPILVVLDNITSMTPGQSESSPAVRMPPASEALAYLIFTSGSTGNPKGVMVTHQNLCSNASIMTTSVNMTADSRVLQFASYAFDASLWEMLGALFAGACLVIPSESESKEDLAGCIDRMAVTWAFLTPSVARILKPERVPQLRVLALGGEPIAVSDLDTWRTHAQVVCAYGPSETAILASTTSPSTIPTVGKDIGMPTTCSLWIVDKRDYQKLAPLGATGELLIEGPNVSKGYLGDPEKTNEAFPVAPRWLSQLRQSPTRVYRTGDLVRFDQSTGTLRFVGRKDNQIKFHGQRIELGDIENHAQQALPNASTVIVDLISPGESQQSYLVAFVYQPDTSTQTADAIDPILLPPSESFRTDALAAQKHMHDRLPHYMVPTAFLPLNCLPLSNTGKADRKRLRHCALALSGSELNAYRATATAKRMPSTEAECIMQQLIATVLGRDASEIGMDDSFFHLGGDSVQAMRLVSEGRQQGLTLSLRTIFDSPRLDDLARHNSLVQDDQPAAASPATMHDTFSLIDKLVSTYPIDKAAVVDILPTTSFQRHWLDAQLKSYIVVDIPGRISRDRLFTAMQRVVDAHPILRTSFVPHDNTAVQVILRTAFAITDADLSTTTVEDLCRQDANAAIAPGAPYLRVILATGEFGYKLIMRLSHAQYDAVSLSLLMNDLGHAYENDTHELPSSYSPSFTDYITYQQRQKVDSTATTFWRHLLQDVPLTSLDLQPSKPSTSNGTPITRTRDINIATFPQLPNGITLATAVKAAWSIVLAQKTNSPAVIFGQVVHGRGIPLPGVEGIVGPCANITPVVARLSPQTTGLELLQALQDQHRSGLSYEAVDLDDALAYTKGWQAGSPRVQTIVQHQNNVMTDGMGLSLGEVKCGVDVRAVDHVPREVWVYSSVDENKPGMLEVKIMSSTLVLSEEVAEELMDLVVEKVVALLRDPRGVCV</sequence>